<proteinExistence type="inferred from homology"/>
<accession>P51506</accession>
<protein>
    <recommendedName>
        <fullName>Zinc finger protein 80</fullName>
    </recommendedName>
</protein>
<gene>
    <name type="primary">ZNF80</name>
</gene>
<organism>
    <name type="scientific">Pan troglodytes</name>
    <name type="common">Chimpanzee</name>
    <dbReference type="NCBI Taxonomy" id="9598"/>
    <lineage>
        <taxon>Eukaryota</taxon>
        <taxon>Metazoa</taxon>
        <taxon>Chordata</taxon>
        <taxon>Craniata</taxon>
        <taxon>Vertebrata</taxon>
        <taxon>Euteleostomi</taxon>
        <taxon>Mammalia</taxon>
        <taxon>Eutheria</taxon>
        <taxon>Euarchontoglires</taxon>
        <taxon>Primates</taxon>
        <taxon>Haplorrhini</taxon>
        <taxon>Catarrhini</taxon>
        <taxon>Hominidae</taxon>
        <taxon>Pan</taxon>
    </lineage>
</organism>
<reference key="1">
    <citation type="journal article" date="1995" name="Virology">
        <title>Mobilization of an ERV9 human endogenous retroviral element during primate evolution.</title>
        <authorList>
            <person name="di Cristofano A."/>
            <person name="Strazzullo M."/>
            <person name="Parisi T."/>
            <person name="la Mantia G."/>
        </authorList>
    </citation>
    <scope>NUCLEOTIDE SEQUENCE [GENOMIC DNA]</scope>
</reference>
<name>ZNF80_PANTR</name>
<feature type="chain" id="PRO_0000047393" description="Zinc finger protein 80">
    <location>
        <begin position="1"/>
        <end position="273"/>
    </location>
</feature>
<feature type="zinc finger region" description="C2H2-type 1" evidence="1">
    <location>
        <begin position="49"/>
        <end position="71"/>
    </location>
</feature>
<feature type="zinc finger region" description="C2H2-type 2; degenerate" evidence="1">
    <location>
        <begin position="77"/>
        <end position="99"/>
    </location>
</feature>
<feature type="zinc finger region" description="C2H2-type 3; atypical" evidence="1">
    <location>
        <begin position="105"/>
        <end position="127"/>
    </location>
</feature>
<feature type="zinc finger region" description="C2H2-type 4" evidence="1">
    <location>
        <begin position="133"/>
        <end position="155"/>
    </location>
</feature>
<feature type="zinc finger region" description="C2H2-type 5" evidence="1">
    <location>
        <begin position="161"/>
        <end position="183"/>
    </location>
</feature>
<feature type="zinc finger region" description="C2H2-type 6" evidence="1">
    <location>
        <begin position="187"/>
        <end position="211"/>
    </location>
</feature>
<feature type="zinc finger region" description="C2H2-type 7" evidence="1">
    <location>
        <begin position="217"/>
        <end position="239"/>
    </location>
</feature>
<keyword id="KW-0238">DNA-binding</keyword>
<keyword id="KW-0479">Metal-binding</keyword>
<keyword id="KW-0539">Nucleus</keyword>
<keyword id="KW-1185">Reference proteome</keyword>
<keyword id="KW-0677">Repeat</keyword>
<keyword id="KW-0804">Transcription</keyword>
<keyword id="KW-0805">Transcription regulation</keyword>
<keyword id="KW-0862">Zinc</keyword>
<keyword id="KW-0863">Zinc-finger</keyword>
<sequence length="273" mass="31552">MSPKRDGLGTDDGLHSQVLQEQVSTGDNLHECDSQGRSKDTLVREEKTYKCKECGSVFNKNSLLVRHQQIHTGVKPYEYQECGKAFPEKVDFVRHMRIHTGEKPCKCVECRKVFNRRSHLLCYRQIHTGENPYECSECGKTFSYHSVFIQHRVTHTGEKLFGCKECGKTFYYNSSLTRHMKIHTGEKPCKCSECGKTFTYHSVFFRHSMTHTSGKPYECKECGKGFYYSYSLTRHTRSHTGEKPYECLEHRKAFGYHSAFAQQSKIHSGGKNL</sequence>
<comment type="function">
    <text>May be involved in transcriptional regulation.</text>
</comment>
<comment type="subcellular location">
    <subcellularLocation>
        <location evidence="2">Nucleus</location>
    </subcellularLocation>
</comment>
<comment type="similarity">
    <text evidence="2">Belongs to the krueppel C2H2-type zinc-finger protein family.</text>
</comment>
<evidence type="ECO:0000255" key="1">
    <source>
        <dbReference type="PROSITE-ProRule" id="PRU00042"/>
    </source>
</evidence>
<evidence type="ECO:0000305" key="2"/>
<dbReference type="EMBL" id="X89632">
    <property type="protein sequence ID" value="CAA61774.1"/>
    <property type="molecule type" value="Genomic_DNA"/>
</dbReference>
<dbReference type="RefSeq" id="NP_001129105.1">
    <property type="nucleotide sequence ID" value="NM_001135633.1"/>
</dbReference>
<dbReference type="SMR" id="P51506"/>
<dbReference type="STRING" id="9598.ENSPTRP00000060251"/>
<dbReference type="PaxDb" id="9598-ENSPTRP00000060251"/>
<dbReference type="GeneID" id="470886"/>
<dbReference type="KEGG" id="ptr:470886"/>
<dbReference type="CTD" id="7634"/>
<dbReference type="eggNOG" id="KOG1721">
    <property type="taxonomic scope" value="Eukaryota"/>
</dbReference>
<dbReference type="InParanoid" id="P51506"/>
<dbReference type="OrthoDB" id="689at9604"/>
<dbReference type="Proteomes" id="UP000002277">
    <property type="component" value="Unplaced"/>
</dbReference>
<dbReference type="GO" id="GO:0005634">
    <property type="term" value="C:nucleus"/>
    <property type="evidence" value="ECO:0007669"/>
    <property type="project" value="UniProtKB-SubCell"/>
</dbReference>
<dbReference type="GO" id="GO:0003700">
    <property type="term" value="F:DNA-binding transcription factor activity"/>
    <property type="evidence" value="ECO:0000318"/>
    <property type="project" value="GO_Central"/>
</dbReference>
<dbReference type="GO" id="GO:0000978">
    <property type="term" value="F:RNA polymerase II cis-regulatory region sequence-specific DNA binding"/>
    <property type="evidence" value="ECO:0000318"/>
    <property type="project" value="GO_Central"/>
</dbReference>
<dbReference type="GO" id="GO:0008270">
    <property type="term" value="F:zinc ion binding"/>
    <property type="evidence" value="ECO:0007669"/>
    <property type="project" value="UniProtKB-KW"/>
</dbReference>
<dbReference type="GO" id="GO:0006357">
    <property type="term" value="P:regulation of transcription by RNA polymerase II"/>
    <property type="evidence" value="ECO:0000318"/>
    <property type="project" value="GO_Central"/>
</dbReference>
<dbReference type="FunFam" id="3.30.160.60:FF:000478">
    <property type="entry name" value="Zinc finger protein 133"/>
    <property type="match status" value="1"/>
</dbReference>
<dbReference type="FunFam" id="3.30.160.60:FF:001498">
    <property type="entry name" value="Zinc finger protein 404"/>
    <property type="match status" value="1"/>
</dbReference>
<dbReference type="FunFam" id="3.30.160.60:FF:002341">
    <property type="entry name" value="Zinc finger protein 80"/>
    <property type="match status" value="1"/>
</dbReference>
<dbReference type="FunFam" id="3.30.160.60:FF:002593">
    <property type="entry name" value="Zinc finger protein 80"/>
    <property type="match status" value="1"/>
</dbReference>
<dbReference type="FunFam" id="3.30.160.60:FF:000896">
    <property type="entry name" value="Zinc finger protein 805"/>
    <property type="match status" value="1"/>
</dbReference>
<dbReference type="FunFam" id="3.30.160.60:FF:000275">
    <property type="entry name" value="zinc finger protein 90 homolog"/>
    <property type="match status" value="1"/>
</dbReference>
<dbReference type="FunFam" id="3.30.160.60:FF:001111">
    <property type="entry name" value="Zinc finger protein 92 homolog"/>
    <property type="match status" value="1"/>
</dbReference>
<dbReference type="Gene3D" id="3.30.160.60">
    <property type="entry name" value="Classic Zinc Finger"/>
    <property type="match status" value="8"/>
</dbReference>
<dbReference type="InterPro" id="IPR036236">
    <property type="entry name" value="Znf_C2H2_sf"/>
</dbReference>
<dbReference type="InterPro" id="IPR013087">
    <property type="entry name" value="Znf_C2H2_type"/>
</dbReference>
<dbReference type="PANTHER" id="PTHR24399:SF75">
    <property type="entry name" value="ZFP14 ZINC FINGER PROTEIN-RELATED"/>
    <property type="match status" value="1"/>
</dbReference>
<dbReference type="PANTHER" id="PTHR24399">
    <property type="entry name" value="ZINC FINGER AND BTB DOMAIN-CONTAINING"/>
    <property type="match status" value="1"/>
</dbReference>
<dbReference type="Pfam" id="PF00096">
    <property type="entry name" value="zf-C2H2"/>
    <property type="match status" value="5"/>
</dbReference>
<dbReference type="SMART" id="SM00355">
    <property type="entry name" value="ZnF_C2H2"/>
    <property type="match status" value="6"/>
</dbReference>
<dbReference type="SUPFAM" id="SSF57667">
    <property type="entry name" value="beta-beta-alpha zinc fingers"/>
    <property type="match status" value="4"/>
</dbReference>
<dbReference type="PROSITE" id="PS00028">
    <property type="entry name" value="ZINC_FINGER_C2H2_1"/>
    <property type="match status" value="5"/>
</dbReference>
<dbReference type="PROSITE" id="PS50157">
    <property type="entry name" value="ZINC_FINGER_C2H2_2"/>
    <property type="match status" value="7"/>
</dbReference>